<name>ALR_STRA5</name>
<keyword id="KW-0413">Isomerase</keyword>
<keyword id="KW-0663">Pyridoxal phosphate</keyword>
<keyword id="KW-1185">Reference proteome</keyword>
<comment type="function">
    <text evidence="1">Catalyzes the interconversion of L-alanine and D-alanine. May also act on other amino acids.</text>
</comment>
<comment type="catalytic activity">
    <reaction evidence="1">
        <text>L-alanine = D-alanine</text>
        <dbReference type="Rhea" id="RHEA:20249"/>
        <dbReference type="ChEBI" id="CHEBI:57416"/>
        <dbReference type="ChEBI" id="CHEBI:57972"/>
        <dbReference type="EC" id="5.1.1.1"/>
    </reaction>
</comment>
<comment type="cofactor">
    <cofactor evidence="1">
        <name>pyridoxal 5'-phosphate</name>
        <dbReference type="ChEBI" id="CHEBI:597326"/>
    </cofactor>
</comment>
<comment type="pathway">
    <text evidence="1">Amino-acid biosynthesis; D-alanine biosynthesis; D-alanine from L-alanine: step 1/1.</text>
</comment>
<comment type="similarity">
    <text evidence="1">Belongs to the alanine racemase family.</text>
</comment>
<organism>
    <name type="scientific">Streptococcus agalactiae serotype V (strain ATCC BAA-611 / 2603 V/R)</name>
    <dbReference type="NCBI Taxonomy" id="208435"/>
    <lineage>
        <taxon>Bacteria</taxon>
        <taxon>Bacillati</taxon>
        <taxon>Bacillota</taxon>
        <taxon>Bacilli</taxon>
        <taxon>Lactobacillales</taxon>
        <taxon>Streptococcaceae</taxon>
        <taxon>Streptococcus</taxon>
    </lineage>
</organism>
<gene>
    <name type="primary">alr</name>
    <name type="ordered locus">SAG1684</name>
</gene>
<evidence type="ECO:0000255" key="1">
    <source>
        <dbReference type="HAMAP-Rule" id="MF_01201"/>
    </source>
</evidence>
<proteinExistence type="inferred from homology"/>
<protein>
    <recommendedName>
        <fullName evidence="1">Alanine racemase</fullName>
        <ecNumber evidence="1">5.1.1.1</ecNumber>
    </recommendedName>
</protein>
<sequence length="366" mass="40064">MISSYHRPTRALIDLEAIANNVKSVQEHIPSDKKTFAVVKANAYGHGAVEVSKYIESIVDGFCVSNLDEAIELRQAGIVKMILVLGVVMPEQVILAKNENITLTVASLEWLRLCQTSAVDLSGLEVHIKVDSGMGRIGVRQLDEGNKLISELGESGASVKGIFTHFATADEADNCKFNQQLTFFKDFISGLDNCPDLVHASNSATSLWHSETIFNAVRLGVVMYGLNPSGTDLDLPYPINPALSLESELVHVKQLHDGSQVGYGATYQVTGDEFVGTVPIGYADGWTRDMQGFSVIVNGELCEIIGRVSMDQMTIRLPQKYTIGTKVTLIGQQGSCNITTTDVAQKRQTINYEVLCLLSDRIPRYY</sequence>
<accession>Q8DY10</accession>
<feature type="chain" id="PRO_1000066043" description="Alanine racemase">
    <location>
        <begin position="1"/>
        <end position="366"/>
    </location>
</feature>
<feature type="active site" description="Proton acceptor; specific for D-alanine" evidence="1">
    <location>
        <position position="40"/>
    </location>
</feature>
<feature type="active site" description="Proton acceptor; specific for L-alanine" evidence="1">
    <location>
        <position position="263"/>
    </location>
</feature>
<feature type="binding site" evidence="1">
    <location>
        <position position="136"/>
    </location>
    <ligand>
        <name>substrate</name>
    </ligand>
</feature>
<feature type="binding site" evidence="1">
    <location>
        <position position="310"/>
    </location>
    <ligand>
        <name>substrate</name>
    </ligand>
</feature>
<feature type="modified residue" description="N6-(pyridoxal phosphate)lysine" evidence="1">
    <location>
        <position position="40"/>
    </location>
</feature>
<dbReference type="EC" id="5.1.1.1" evidence="1"/>
<dbReference type="EMBL" id="AE009948">
    <property type="protein sequence ID" value="AAN00548.1"/>
    <property type="molecule type" value="Genomic_DNA"/>
</dbReference>
<dbReference type="RefSeq" id="NP_688675.1">
    <property type="nucleotide sequence ID" value="NC_004116.1"/>
</dbReference>
<dbReference type="RefSeq" id="WP_000625941.1">
    <property type="nucleotide sequence ID" value="NC_004116.1"/>
</dbReference>
<dbReference type="SMR" id="Q8DY10"/>
<dbReference type="STRING" id="208435.SAG1684"/>
<dbReference type="KEGG" id="sag:SAG1684"/>
<dbReference type="PATRIC" id="fig|208435.3.peg.1693"/>
<dbReference type="HOGENOM" id="CLU_028393_2_1_9"/>
<dbReference type="OrthoDB" id="9813814at2"/>
<dbReference type="UniPathway" id="UPA00042">
    <property type="reaction ID" value="UER00497"/>
</dbReference>
<dbReference type="Proteomes" id="UP000000821">
    <property type="component" value="Chromosome"/>
</dbReference>
<dbReference type="GO" id="GO:0005829">
    <property type="term" value="C:cytosol"/>
    <property type="evidence" value="ECO:0007669"/>
    <property type="project" value="TreeGrafter"/>
</dbReference>
<dbReference type="GO" id="GO:0008784">
    <property type="term" value="F:alanine racemase activity"/>
    <property type="evidence" value="ECO:0007669"/>
    <property type="project" value="UniProtKB-UniRule"/>
</dbReference>
<dbReference type="GO" id="GO:0030170">
    <property type="term" value="F:pyridoxal phosphate binding"/>
    <property type="evidence" value="ECO:0007669"/>
    <property type="project" value="UniProtKB-UniRule"/>
</dbReference>
<dbReference type="GO" id="GO:0030632">
    <property type="term" value="P:D-alanine biosynthetic process"/>
    <property type="evidence" value="ECO:0007669"/>
    <property type="project" value="UniProtKB-UniRule"/>
</dbReference>
<dbReference type="GO" id="GO:0009252">
    <property type="term" value="P:peptidoglycan biosynthetic process"/>
    <property type="evidence" value="ECO:0007669"/>
    <property type="project" value="TreeGrafter"/>
</dbReference>
<dbReference type="CDD" id="cd00430">
    <property type="entry name" value="PLPDE_III_AR"/>
    <property type="match status" value="1"/>
</dbReference>
<dbReference type="FunFam" id="2.40.37.10:FF:000006">
    <property type="entry name" value="Alanine racemase"/>
    <property type="match status" value="1"/>
</dbReference>
<dbReference type="FunFam" id="3.20.20.10:FF:000002">
    <property type="entry name" value="Alanine racemase"/>
    <property type="match status" value="1"/>
</dbReference>
<dbReference type="Gene3D" id="3.20.20.10">
    <property type="entry name" value="Alanine racemase"/>
    <property type="match status" value="1"/>
</dbReference>
<dbReference type="Gene3D" id="2.40.37.10">
    <property type="entry name" value="Lyase, Ornithine Decarboxylase, Chain A, domain 1"/>
    <property type="match status" value="1"/>
</dbReference>
<dbReference type="HAMAP" id="MF_01201">
    <property type="entry name" value="Ala_racemase"/>
    <property type="match status" value="1"/>
</dbReference>
<dbReference type="InterPro" id="IPR000821">
    <property type="entry name" value="Ala_racemase"/>
</dbReference>
<dbReference type="InterPro" id="IPR009006">
    <property type="entry name" value="Ala_racemase/Decarboxylase_C"/>
</dbReference>
<dbReference type="InterPro" id="IPR011079">
    <property type="entry name" value="Ala_racemase_C"/>
</dbReference>
<dbReference type="InterPro" id="IPR001608">
    <property type="entry name" value="Ala_racemase_N"/>
</dbReference>
<dbReference type="InterPro" id="IPR020622">
    <property type="entry name" value="Ala_racemase_pyridoxalP-BS"/>
</dbReference>
<dbReference type="InterPro" id="IPR029066">
    <property type="entry name" value="PLP-binding_barrel"/>
</dbReference>
<dbReference type="NCBIfam" id="TIGR00492">
    <property type="entry name" value="alr"/>
    <property type="match status" value="1"/>
</dbReference>
<dbReference type="PANTHER" id="PTHR30511">
    <property type="entry name" value="ALANINE RACEMASE"/>
    <property type="match status" value="1"/>
</dbReference>
<dbReference type="PANTHER" id="PTHR30511:SF0">
    <property type="entry name" value="ALANINE RACEMASE, CATABOLIC-RELATED"/>
    <property type="match status" value="1"/>
</dbReference>
<dbReference type="Pfam" id="PF00842">
    <property type="entry name" value="Ala_racemase_C"/>
    <property type="match status" value="1"/>
</dbReference>
<dbReference type="Pfam" id="PF01168">
    <property type="entry name" value="Ala_racemase_N"/>
    <property type="match status" value="1"/>
</dbReference>
<dbReference type="PRINTS" id="PR00992">
    <property type="entry name" value="ALARACEMASE"/>
</dbReference>
<dbReference type="SMART" id="SM01005">
    <property type="entry name" value="Ala_racemase_C"/>
    <property type="match status" value="1"/>
</dbReference>
<dbReference type="SUPFAM" id="SSF50621">
    <property type="entry name" value="Alanine racemase C-terminal domain-like"/>
    <property type="match status" value="1"/>
</dbReference>
<dbReference type="SUPFAM" id="SSF51419">
    <property type="entry name" value="PLP-binding barrel"/>
    <property type="match status" value="1"/>
</dbReference>
<dbReference type="PROSITE" id="PS00395">
    <property type="entry name" value="ALANINE_RACEMASE"/>
    <property type="match status" value="1"/>
</dbReference>
<reference key="1">
    <citation type="journal article" date="2002" name="Proc. Natl. Acad. Sci. U.S.A.">
        <title>Complete genome sequence and comparative genomic analysis of an emerging human pathogen, serotype V Streptococcus agalactiae.</title>
        <authorList>
            <person name="Tettelin H."/>
            <person name="Masignani V."/>
            <person name="Cieslewicz M.J."/>
            <person name="Eisen J.A."/>
            <person name="Peterson S.N."/>
            <person name="Wessels M.R."/>
            <person name="Paulsen I.T."/>
            <person name="Nelson K.E."/>
            <person name="Margarit I."/>
            <person name="Read T.D."/>
            <person name="Madoff L.C."/>
            <person name="Wolf A.M."/>
            <person name="Beanan M.J."/>
            <person name="Brinkac L.M."/>
            <person name="Daugherty S.C."/>
            <person name="DeBoy R.T."/>
            <person name="Durkin A.S."/>
            <person name="Kolonay J.F."/>
            <person name="Madupu R."/>
            <person name="Lewis M.R."/>
            <person name="Radune D."/>
            <person name="Fedorova N.B."/>
            <person name="Scanlan D."/>
            <person name="Khouri H.M."/>
            <person name="Mulligan S."/>
            <person name="Carty H.A."/>
            <person name="Cline R.T."/>
            <person name="Van Aken S.E."/>
            <person name="Gill J."/>
            <person name="Scarselli M."/>
            <person name="Mora M."/>
            <person name="Iacobini E.T."/>
            <person name="Brettoni C."/>
            <person name="Galli G."/>
            <person name="Mariani M."/>
            <person name="Vegni F."/>
            <person name="Maione D."/>
            <person name="Rinaudo D."/>
            <person name="Rappuoli R."/>
            <person name="Telford J.L."/>
            <person name="Kasper D.L."/>
            <person name="Grandi G."/>
            <person name="Fraser C.M."/>
        </authorList>
    </citation>
    <scope>NUCLEOTIDE SEQUENCE [LARGE SCALE GENOMIC DNA]</scope>
    <source>
        <strain>ATCC BAA-611 / 2603 V/R</strain>
    </source>
</reference>